<evidence type="ECO:0000255" key="1">
    <source>
        <dbReference type="HAMAP-Rule" id="MF_01313"/>
    </source>
</evidence>
<keyword id="KW-0963">Cytoplasm</keyword>
<keyword id="KW-0274">FAD</keyword>
<keyword id="KW-0285">Flavoprotein</keyword>
<keyword id="KW-0520">NAD</keyword>
<keyword id="KW-0560">Oxidoreductase</keyword>
<name>NORW_SALHS</name>
<comment type="function">
    <text evidence="1">One of at least two accessory proteins for anaerobic nitric oxide (NO) reductase. Reduces the rubredoxin moiety of NO reductase.</text>
</comment>
<comment type="catalytic activity">
    <reaction evidence="1">
        <text>2 reduced [nitric oxide reductase rubredoxin domain] + NAD(+) + H(+) = 2 oxidized [nitric oxide reductase rubredoxin domain] + NADH</text>
        <dbReference type="Rhea" id="RHEA:42960"/>
        <dbReference type="Rhea" id="RHEA-COMP:10304"/>
        <dbReference type="Rhea" id="RHEA-COMP:10305"/>
        <dbReference type="ChEBI" id="CHEBI:15378"/>
        <dbReference type="ChEBI" id="CHEBI:29033"/>
        <dbReference type="ChEBI" id="CHEBI:29034"/>
        <dbReference type="ChEBI" id="CHEBI:57540"/>
        <dbReference type="ChEBI" id="CHEBI:57945"/>
    </reaction>
</comment>
<comment type="cofactor">
    <cofactor evidence="1">
        <name>FAD</name>
        <dbReference type="ChEBI" id="CHEBI:57692"/>
    </cofactor>
</comment>
<comment type="pathway">
    <text evidence="1">Nitrogen metabolism; nitric oxide reduction.</text>
</comment>
<comment type="subcellular location">
    <subcellularLocation>
        <location evidence="1">Cytoplasm</location>
    </subcellularLocation>
</comment>
<comment type="similarity">
    <text evidence="1">Belongs to the FAD-dependent oxidoreductase family.</text>
</comment>
<gene>
    <name evidence="1" type="primary">norW</name>
    <name evidence="1" type="synonym">flrR</name>
    <name type="ordered locus">SeHA_C3027</name>
</gene>
<dbReference type="EC" id="1.18.1.-" evidence="1"/>
<dbReference type="EMBL" id="CP001120">
    <property type="protein sequence ID" value="ACF65989.1"/>
    <property type="molecule type" value="Genomic_DNA"/>
</dbReference>
<dbReference type="RefSeq" id="WP_000086348.1">
    <property type="nucleotide sequence ID" value="NC_011083.1"/>
</dbReference>
<dbReference type="SMR" id="B4TF25"/>
<dbReference type="KEGG" id="seh:SeHA_C3027"/>
<dbReference type="HOGENOM" id="CLU_003291_4_4_6"/>
<dbReference type="UniPathway" id="UPA00638"/>
<dbReference type="Proteomes" id="UP000001866">
    <property type="component" value="Chromosome"/>
</dbReference>
<dbReference type="GO" id="GO:0005737">
    <property type="term" value="C:cytoplasm"/>
    <property type="evidence" value="ECO:0007669"/>
    <property type="project" value="UniProtKB-SubCell"/>
</dbReference>
<dbReference type="GO" id="GO:0016731">
    <property type="term" value="F:oxidoreductase activity, acting on iron-sulfur proteins as donors, NAD or NADP as acceptor"/>
    <property type="evidence" value="ECO:0007669"/>
    <property type="project" value="UniProtKB-UniRule"/>
</dbReference>
<dbReference type="Gene3D" id="3.30.390.120">
    <property type="match status" value="1"/>
</dbReference>
<dbReference type="Gene3D" id="3.50.50.60">
    <property type="entry name" value="FAD/NAD(P)-binding domain"/>
    <property type="match status" value="2"/>
</dbReference>
<dbReference type="HAMAP" id="MF_01313">
    <property type="entry name" value="NorW"/>
    <property type="match status" value="1"/>
</dbReference>
<dbReference type="InterPro" id="IPR050260">
    <property type="entry name" value="FAD-bd_OxRdtase"/>
</dbReference>
<dbReference type="InterPro" id="IPR036188">
    <property type="entry name" value="FAD/NAD-bd_sf"/>
</dbReference>
<dbReference type="InterPro" id="IPR023753">
    <property type="entry name" value="FAD/NAD-binding_dom"/>
</dbReference>
<dbReference type="InterPro" id="IPR023961">
    <property type="entry name" value="NO_rdtase_NorW"/>
</dbReference>
<dbReference type="InterPro" id="IPR041364">
    <property type="entry name" value="Rbx-bd"/>
</dbReference>
<dbReference type="NCBIfam" id="NF003437">
    <property type="entry name" value="PRK04965.1"/>
    <property type="match status" value="1"/>
</dbReference>
<dbReference type="PANTHER" id="PTHR43429:SF3">
    <property type="entry name" value="NITRITE REDUCTASE [NAD(P)H]"/>
    <property type="match status" value="1"/>
</dbReference>
<dbReference type="PANTHER" id="PTHR43429">
    <property type="entry name" value="PYRIDINE NUCLEOTIDE-DISULFIDE OXIDOREDUCTASE DOMAIN-CONTAINING"/>
    <property type="match status" value="1"/>
</dbReference>
<dbReference type="Pfam" id="PF07992">
    <property type="entry name" value="Pyr_redox_2"/>
    <property type="match status" value="1"/>
</dbReference>
<dbReference type="Pfam" id="PF18113">
    <property type="entry name" value="Rbx_binding"/>
    <property type="match status" value="1"/>
</dbReference>
<dbReference type="PRINTS" id="PR00368">
    <property type="entry name" value="FADPNR"/>
</dbReference>
<dbReference type="PRINTS" id="PR00411">
    <property type="entry name" value="PNDRDTASEI"/>
</dbReference>
<dbReference type="SUPFAM" id="SSF51905">
    <property type="entry name" value="FAD/NAD(P)-binding domain"/>
    <property type="match status" value="1"/>
</dbReference>
<accession>B4TF25</accession>
<feature type="chain" id="PRO_1000141181" description="Nitric oxide reductase FlRd-NAD(+) reductase">
    <location>
        <begin position="1"/>
        <end position="377"/>
    </location>
</feature>
<organism>
    <name type="scientific">Salmonella heidelberg (strain SL476)</name>
    <dbReference type="NCBI Taxonomy" id="454169"/>
    <lineage>
        <taxon>Bacteria</taxon>
        <taxon>Pseudomonadati</taxon>
        <taxon>Pseudomonadota</taxon>
        <taxon>Gammaproteobacteria</taxon>
        <taxon>Enterobacterales</taxon>
        <taxon>Enterobacteriaceae</taxon>
        <taxon>Salmonella</taxon>
    </lineage>
</organism>
<proteinExistence type="inferred from homology"/>
<protein>
    <recommendedName>
        <fullName evidence="1">Nitric oxide reductase FlRd-NAD(+) reductase</fullName>
        <ecNumber evidence="1">1.18.1.-</ecNumber>
    </recommendedName>
    <alternativeName>
        <fullName evidence="1">Flavorubredoxin reductase</fullName>
        <shortName evidence="1">FlRd-reductase</shortName>
        <shortName evidence="1">FlavoRb reductase</shortName>
    </alternativeName>
</protein>
<sequence length="377" mass="41074">MSRGIIIIGSGFAARQLVKNIRKQDAHVPLTLIAADSMDEYNKPDLSHVISQSQRADDLTRQLAGEFAEQFNLRLFPHTWVTDIDADAHVVKSQDKQWQYDKLVLATGAAAFVPPIAGRELMLTLNSQQEYRACETQLRDAQRVLIVGGGLIGSELAMDFCRAGKTVTLMDNAASLLASLMPPEVSSRLQHHLTDMGVHLLLKSQLQKLEKTEAGIRATLVSQHSIEVDAVIAATGLRPETALARRAGVAVNRGVCVDSYLQTSHPDIYAIGDCAEINGQVLPFLQPIQLSAMYLAKNLLGGSAPLKLPAMLVKVKTPELPLHLAGETQRHDLSWQITAESDGMIAKGMSGEGQLRAFVVSEDRMKEAFALLKTLSV</sequence>
<reference key="1">
    <citation type="journal article" date="2011" name="J. Bacteriol.">
        <title>Comparative genomics of 28 Salmonella enterica isolates: evidence for CRISPR-mediated adaptive sublineage evolution.</title>
        <authorList>
            <person name="Fricke W.F."/>
            <person name="Mammel M.K."/>
            <person name="McDermott P.F."/>
            <person name="Tartera C."/>
            <person name="White D.G."/>
            <person name="Leclerc J.E."/>
            <person name="Ravel J."/>
            <person name="Cebula T.A."/>
        </authorList>
    </citation>
    <scope>NUCLEOTIDE SEQUENCE [LARGE SCALE GENOMIC DNA]</scope>
    <source>
        <strain>SL476</strain>
    </source>
</reference>